<dbReference type="EC" id="2.5.1.-" evidence="4"/>
<dbReference type="EMBL" id="HQ731031">
    <property type="protein sequence ID" value="ADY00128.1"/>
    <property type="molecule type" value="Genomic_DNA"/>
</dbReference>
<dbReference type="SMR" id="F1DBA7"/>
<dbReference type="UniPathway" id="UPA00213"/>
<dbReference type="GO" id="GO:0005794">
    <property type="term" value="C:Golgi apparatus"/>
    <property type="evidence" value="ECO:0000250"/>
    <property type="project" value="GO_Central"/>
</dbReference>
<dbReference type="GO" id="GO:0000139">
    <property type="term" value="C:Golgi membrane"/>
    <property type="evidence" value="ECO:0007669"/>
    <property type="project" value="UniProtKB-SubCell"/>
</dbReference>
<dbReference type="GO" id="GO:0005886">
    <property type="term" value="C:plasma membrane"/>
    <property type="evidence" value="ECO:0007669"/>
    <property type="project" value="TreeGrafter"/>
</dbReference>
<dbReference type="GO" id="GO:0004659">
    <property type="term" value="F:prenyltransferase activity"/>
    <property type="evidence" value="ECO:0000250"/>
    <property type="project" value="GO_Central"/>
</dbReference>
<dbReference type="GO" id="GO:0140722">
    <property type="term" value="P:mycophenolic acid biosynthetic process"/>
    <property type="evidence" value="ECO:0000250"/>
    <property type="project" value="GO_Central"/>
</dbReference>
<dbReference type="GO" id="GO:0016114">
    <property type="term" value="P:terpenoid biosynthetic process"/>
    <property type="evidence" value="ECO:0007669"/>
    <property type="project" value="UniProtKB-UniPathway"/>
</dbReference>
<dbReference type="CDD" id="cd13959">
    <property type="entry name" value="PT_UbiA_COQ2"/>
    <property type="match status" value="1"/>
</dbReference>
<dbReference type="FunFam" id="1.10.357.140:FF:000008">
    <property type="entry name" value="4-hydroxybenzoate octaprenyltransferase"/>
    <property type="match status" value="1"/>
</dbReference>
<dbReference type="Gene3D" id="1.10.357.140">
    <property type="entry name" value="UbiA prenyltransferase"/>
    <property type="match status" value="1"/>
</dbReference>
<dbReference type="Gene3D" id="1.20.120.1780">
    <property type="entry name" value="UbiA prenyltransferase"/>
    <property type="match status" value="1"/>
</dbReference>
<dbReference type="InterPro" id="IPR039653">
    <property type="entry name" value="Prenyltransferase"/>
</dbReference>
<dbReference type="InterPro" id="IPR000537">
    <property type="entry name" value="UbiA_prenyltransferase"/>
</dbReference>
<dbReference type="InterPro" id="IPR030470">
    <property type="entry name" value="UbiA_prenylTrfase_CS"/>
</dbReference>
<dbReference type="InterPro" id="IPR044878">
    <property type="entry name" value="UbiA_sf"/>
</dbReference>
<dbReference type="PANTHER" id="PTHR11048:SF28">
    <property type="entry name" value="4-HYDROXYBENZOATE POLYPRENYLTRANSFERASE, MITOCHONDRIAL"/>
    <property type="match status" value="1"/>
</dbReference>
<dbReference type="PANTHER" id="PTHR11048">
    <property type="entry name" value="PRENYLTRANSFERASES"/>
    <property type="match status" value="1"/>
</dbReference>
<dbReference type="Pfam" id="PF01040">
    <property type="entry name" value="UbiA"/>
    <property type="match status" value="1"/>
</dbReference>
<dbReference type="PROSITE" id="PS00943">
    <property type="entry name" value="UBIA"/>
    <property type="match status" value="1"/>
</dbReference>
<comment type="function">
    <text evidence="4 8 9">Polyprenyl transferase; part of the gene cluster that mediates the biosynthesis of mycophenolic acid (MPA), the first isolated antibiotic natural product in the world obtained from a culture of Penicillium brevicompactum in 1893 (PubMed:21398490). MpaA is a Golgi apparatus-associated enzyme that catalyzes the prenylation of 5,7-dihydroxy-4,6-dimethylphthalide (DHMP) to yield farnesyl-DHMP (FDHMP) (PubMed:21398490). The first step of the pathway is the synthesis of 5-methylorsellinic acid (5MOA) by the cytosolic polyketide synthase mpaC. 5MOA is then converted to the phthalide compound 5,7-dihydroxy-4,6-dimethylphthalide (DHMP) by the endoplasmic reticulum-bound cytochrome P450 monooxygenase mpaDE. MpaDE first catalyzes hydroxylation of 5-MOA to 4,6-dihydroxy-2-(hydroxymethyl)-3-methylbenzoic acid (DHMB). MpaDE then acts as a lactone synthase that catalyzes the ring closure to convert DHMB into DHMP. The next step is the prenylation of DHMP by the Golgi apparatus-associated prenyltransferase mpaA to yield farnesyl-DHMP (FDHMP). The ER-bound oxygenase mpaB then mediates the oxidative cleavage the C19-C20 double bond in FDHMP to yield FDHMP-3C via a mycophenolic aldehyde intermediate. The O-methyltransferase mpaG catalyzes the methylation of FDHMP-3C to yield MFDHMP-3C. After the cytosolic methylation of FDHMP-3C, MFDHMP-3C enters into peroxisomes probably via free diffusion due to its low molecular weight. Upon a peroxisomal CoA ligation reaction, catalyzed by a beta-oxidation component enzyme acyl-CoA ligase ACL891, MFDHMP-3C-CoA would then be restricted to peroxisomes for the following beta-oxidation pathway steps. The peroxisomal beta-oxidation machinery than converts MFDHMP-3C-CoA into MPA_CoA, via a beta-oxidation chain-shortening process. Finally mpaH acts as a peroxisomal acyl-CoA hydrolase with high substrate specificity toward MPA-CoA to release the final product MPA (Probable) (PubMed:21398490, PubMed:22544261).</text>
</comment>
<comment type="catalytic activity">
    <reaction evidence="4">
        <text>5,7-dihydroxy-4-methylphthalide + (2E,6E)-farnesyl diphosphate = 4-farnesyl-3,5-dihydroxy-6-methylphthalide + diphosphate</text>
        <dbReference type="Rhea" id="RHEA:66676"/>
        <dbReference type="ChEBI" id="CHEBI:33019"/>
        <dbReference type="ChEBI" id="CHEBI:68194"/>
        <dbReference type="ChEBI" id="CHEBI:167386"/>
        <dbReference type="ChEBI" id="CHEBI:175763"/>
    </reaction>
    <physiologicalReaction direction="left-to-right" evidence="4">
        <dbReference type="Rhea" id="RHEA:66677"/>
    </physiologicalReaction>
</comment>
<comment type="cofactor">
    <cofactor evidence="2">
        <name>Mg(2+)</name>
        <dbReference type="ChEBI" id="CHEBI:18420"/>
    </cofactor>
</comment>
<comment type="pathway">
    <text evidence="4 5">Secondary metabolite biosynthesis; terpenoid biosynthesis.</text>
</comment>
<comment type="subcellular location">
    <subcellularLocation>
        <location evidence="1">Golgi apparatus membrane</location>
        <topology evidence="3">Multi-pass membrane protein</topology>
    </subcellularLocation>
    <text evidence="7">Membrane association is functionally relevant because mpaA must ostensibly interact with its membrane-embedded substrate FPP.</text>
</comment>
<comment type="similarity">
    <text evidence="7">Belongs to the UbiA prenyltransferase family.</text>
</comment>
<organism evidence="10">
    <name type="scientific">Penicillium brevicompactum</name>
    <dbReference type="NCBI Taxonomy" id="5074"/>
    <lineage>
        <taxon>Eukaryota</taxon>
        <taxon>Fungi</taxon>
        <taxon>Dikarya</taxon>
        <taxon>Ascomycota</taxon>
        <taxon>Pezizomycotina</taxon>
        <taxon>Eurotiomycetes</taxon>
        <taxon>Eurotiomycetidae</taxon>
        <taxon>Eurotiales</taxon>
        <taxon>Aspergillaceae</taxon>
        <taxon>Penicillium</taxon>
    </lineage>
</organism>
<feature type="chain" id="PRO_0000436570" description="Polyprenyl transferase mpaA">
    <location>
        <begin position="1"/>
        <end position="315"/>
    </location>
</feature>
<feature type="transmembrane region" description="Helical" evidence="3">
    <location>
        <begin position="40"/>
        <end position="60"/>
    </location>
</feature>
<feature type="transmembrane region" description="Helical" evidence="3">
    <location>
        <begin position="84"/>
        <end position="103"/>
    </location>
</feature>
<feature type="transmembrane region" description="Helical" evidence="3">
    <location>
        <begin position="118"/>
        <end position="135"/>
    </location>
</feature>
<feature type="transmembrane region" description="Helical" evidence="3">
    <location>
        <begin position="143"/>
        <end position="163"/>
    </location>
</feature>
<feature type="transmembrane region" description="Helical" evidence="3">
    <location>
        <begin position="174"/>
        <end position="194"/>
    </location>
</feature>
<feature type="transmembrane region" description="Helical" evidence="3">
    <location>
        <begin position="224"/>
        <end position="244"/>
    </location>
</feature>
<feature type="transmembrane region" description="Helical" evidence="3">
    <location>
        <begin position="248"/>
        <end position="268"/>
    </location>
</feature>
<feature type="transmembrane region" description="Helical" evidence="3">
    <location>
        <begin position="279"/>
        <end position="299"/>
    </location>
</feature>
<gene>
    <name evidence="6" type="primary">mpaA</name>
</gene>
<evidence type="ECO:0000250" key="1">
    <source>
        <dbReference type="UniProtKB" id="A0A0B5L778"/>
    </source>
</evidence>
<evidence type="ECO:0000250" key="2">
    <source>
        <dbReference type="UniProtKB" id="P32378"/>
    </source>
</evidence>
<evidence type="ECO:0000255" key="3"/>
<evidence type="ECO:0000269" key="4">
    <source>
    </source>
</evidence>
<evidence type="ECO:0000269" key="5">
    <source>
    </source>
</evidence>
<evidence type="ECO:0000303" key="6">
    <source>
    </source>
</evidence>
<evidence type="ECO:0000305" key="7"/>
<evidence type="ECO:0000305" key="8">
    <source>
    </source>
</evidence>
<evidence type="ECO:0000305" key="9">
    <source>
    </source>
</evidence>
<evidence type="ECO:0000312" key="10">
    <source>
        <dbReference type="EMBL" id="ADY00128.1"/>
    </source>
</evidence>
<accession>F1DBA7</accession>
<name>MPAA_PENBR</name>
<keyword id="KW-0333">Golgi apparatus</keyword>
<keyword id="KW-0460">Magnesium</keyword>
<keyword id="KW-0472">Membrane</keyword>
<keyword id="KW-0808">Transferase</keyword>
<keyword id="KW-0812">Transmembrane</keyword>
<keyword id="KW-1133">Transmembrane helix</keyword>
<reference key="1">
    <citation type="journal article" date="2011" name="Appl. Environ. Microbiol.">
        <title>Molecular basis for mycophenolic acid biosynthesis in Penicillium brevicompactum.</title>
        <authorList>
            <person name="Regueira T.B."/>
            <person name="Kildegaard K.R."/>
            <person name="Hansen B.G."/>
            <person name="Mortensen U.H."/>
            <person name="Hertweck C."/>
            <person name="Nielsen J."/>
        </authorList>
    </citation>
    <scope>NUCLEOTIDE SEQUENCE [GENOMIC DNA]</scope>
    <scope>CATALYTIC ACTIVITY</scope>
    <scope>FUNCTION</scope>
    <scope>PATHWAY</scope>
    <source>
        <strain>IBT 23078</strain>
    </source>
</reference>
<reference key="2">
    <citation type="journal article" date="2012" name="Appl. Environ. Microbiol.">
        <title>Involvement of a natural fusion of a cytochrome p450 and a hydrolase in mycophenolic acid biosynthesis.</title>
        <authorList>
            <person name="Hansen B.G."/>
            <person name="Mnich E."/>
            <person name="Nielsen K.F."/>
            <person name="Nielsen J.B."/>
            <person name="Nielsen M.T."/>
            <person name="Mortensen U.H."/>
            <person name="Larsen T.O."/>
            <person name="Patil K.R."/>
        </authorList>
    </citation>
    <scope>FUNCTION</scope>
    <source>
        <strain>IBT23078</strain>
    </source>
</reference>
<protein>
    <recommendedName>
        <fullName evidence="6">Polyprenyl transferase mpaA</fullName>
        <ecNumber evidence="4">2.5.1.-</ecNumber>
    </recommendedName>
    <alternativeName>
        <fullName evidence="6">Mycophenolic acid biosynthesis cluster protein A</fullName>
    </alternativeName>
</protein>
<sequence length="315" mass="35969">MTNAVEDSGPRDLLFLLISTSRFNRYMPYYTMMAAESLSIEFILYKAGLCFVHCLLLCGAGNTWNDLVDRDIDARVARTKMRPLASGKVTLTEALLWMTGQYFLSVKMLDLILDGRNIWSLMLPLTASIMLYPYLKRPIFSKVFVYPQYILGLAIGYPAITGWASITGSEEPLGDIIKHCIPICLLVFFWCVYFNTAYSHQDSVDDRKMNINSAYVIAGQRIRLFLAFLSVLPLLTIPYIISTINSPWLWVSWMATWTVSIIMQIAQFDSQKLESGGRIHWDNFLLGLWTIAACMVEVGLQKVEFWKNVEGYIKL</sequence>
<proteinExistence type="evidence at protein level"/>